<accession>A5VTU1</accession>
<protein>
    <recommendedName>
        <fullName evidence="1">Chaperonin GroEL</fullName>
        <ecNumber evidence="1">5.6.1.7</ecNumber>
    </recommendedName>
    <alternativeName>
        <fullName evidence="1">60 kDa chaperonin</fullName>
    </alternativeName>
    <alternativeName>
        <fullName evidence="1">Chaperonin-60</fullName>
        <shortName evidence="1">Cpn60</shortName>
    </alternativeName>
</protein>
<comment type="function">
    <text evidence="1">Together with its co-chaperonin GroES, plays an essential role in assisting protein folding. The GroEL-GroES system forms a nano-cage that allows encapsulation of the non-native substrate proteins and provides a physical environment optimized to promote and accelerate protein folding.</text>
</comment>
<comment type="catalytic activity">
    <reaction evidence="1">
        <text>ATP + H2O + a folded polypeptide = ADP + phosphate + an unfolded polypeptide.</text>
        <dbReference type="EC" id="5.6.1.7"/>
    </reaction>
</comment>
<comment type="subunit">
    <text evidence="1">Forms a cylinder of 14 subunits composed of two heptameric rings stacked back-to-back. Interacts with the co-chaperonin GroES.</text>
</comment>
<comment type="subcellular location">
    <subcellularLocation>
        <location evidence="1">Cytoplasm</location>
    </subcellularLocation>
</comment>
<comment type="similarity">
    <text evidence="1">Belongs to the chaperonin (HSP60) family.</text>
</comment>
<gene>
    <name evidence="1" type="primary">groEL</name>
    <name evidence="1" type="synonym">groL</name>
    <name type="ordered locus">BOV_A0177</name>
</gene>
<proteinExistence type="inferred from homology"/>
<feature type="chain" id="PRO_1000025756" description="Chaperonin GroEL">
    <location>
        <begin position="1"/>
        <end position="546"/>
    </location>
</feature>
<feature type="binding site" evidence="1">
    <location>
        <begin position="30"/>
        <end position="33"/>
    </location>
    <ligand>
        <name>ATP</name>
        <dbReference type="ChEBI" id="CHEBI:30616"/>
    </ligand>
</feature>
<feature type="binding site" evidence="1">
    <location>
        <position position="51"/>
    </location>
    <ligand>
        <name>ATP</name>
        <dbReference type="ChEBI" id="CHEBI:30616"/>
    </ligand>
</feature>
<feature type="binding site" evidence="1">
    <location>
        <begin position="87"/>
        <end position="91"/>
    </location>
    <ligand>
        <name>ATP</name>
        <dbReference type="ChEBI" id="CHEBI:30616"/>
    </ligand>
</feature>
<feature type="binding site" evidence="1">
    <location>
        <position position="415"/>
    </location>
    <ligand>
        <name>ATP</name>
        <dbReference type="ChEBI" id="CHEBI:30616"/>
    </ligand>
</feature>
<feature type="binding site" evidence="1">
    <location>
        <position position="495"/>
    </location>
    <ligand>
        <name>ATP</name>
        <dbReference type="ChEBI" id="CHEBI:30616"/>
    </ligand>
</feature>
<sequence>MAAKDVKFGRTAREKMLRGVDILADAVKVTLGPKGRNVVIEKSFGAPRITKDGVSVAKEVELEDKFENMGAQMLREVASKTNDTAGDGTTTATVLGQAIVQEGAKAVAAGMNPMDLKRGIDLAVNEVVAELLKKAKKINTSEEVAQVGTISANGEAEIGKMIAEAMQKVGNEGVITVEEAKTAETELEVVEGMQFDRGYLSPYFVTNPEKMVADLEDAYILLHEKKLSNLQALLPVLEAVVQTSKPLLIIAEDVEGEALATLVVNKLRGGLKIAAVKAPGFGDRRKAMLEDIAILTGGQVISEDLGIKLESVTLDMLGRAKKVSISKENTTIVDGAGQKAEIDARVGQIKQQIEETTLDYDREKLQERLAKLAGGVAVIRVGGATEVEVKEKKDRVDDALNATRAAVEEGIVAGGGTALLRASTKITAKGVNADQEAGINIVRRAIQAPARQITTNAGEEASVIVGKILENTSETFGYNTANGEYGDLISLGIVDPVKVVRTALQNAASVAGLLITTEAMIAELPKKDAAPAGMPGGMGGMGGMDF</sequence>
<evidence type="ECO:0000255" key="1">
    <source>
        <dbReference type="HAMAP-Rule" id="MF_00600"/>
    </source>
</evidence>
<dbReference type="EC" id="5.6.1.7" evidence="1"/>
<dbReference type="EMBL" id="CP000709">
    <property type="protein sequence ID" value="ABQ62648.1"/>
    <property type="molecule type" value="Genomic_DNA"/>
</dbReference>
<dbReference type="RefSeq" id="WP_006015193.1">
    <property type="nucleotide sequence ID" value="NC_009504.1"/>
</dbReference>
<dbReference type="SMR" id="A5VTU1"/>
<dbReference type="GeneID" id="45125593"/>
<dbReference type="KEGG" id="bov:BOV_A0177"/>
<dbReference type="HOGENOM" id="CLU_016503_3_0_5"/>
<dbReference type="PhylomeDB" id="A5VTU1"/>
<dbReference type="Proteomes" id="UP000006383">
    <property type="component" value="Chromosome II"/>
</dbReference>
<dbReference type="GO" id="GO:0005737">
    <property type="term" value="C:cytoplasm"/>
    <property type="evidence" value="ECO:0007669"/>
    <property type="project" value="UniProtKB-SubCell"/>
</dbReference>
<dbReference type="GO" id="GO:0005524">
    <property type="term" value="F:ATP binding"/>
    <property type="evidence" value="ECO:0007669"/>
    <property type="project" value="UniProtKB-UniRule"/>
</dbReference>
<dbReference type="GO" id="GO:0140662">
    <property type="term" value="F:ATP-dependent protein folding chaperone"/>
    <property type="evidence" value="ECO:0007669"/>
    <property type="project" value="InterPro"/>
</dbReference>
<dbReference type="GO" id="GO:0016853">
    <property type="term" value="F:isomerase activity"/>
    <property type="evidence" value="ECO:0007669"/>
    <property type="project" value="UniProtKB-KW"/>
</dbReference>
<dbReference type="GO" id="GO:0051082">
    <property type="term" value="F:unfolded protein binding"/>
    <property type="evidence" value="ECO:0007669"/>
    <property type="project" value="UniProtKB-UniRule"/>
</dbReference>
<dbReference type="GO" id="GO:0042026">
    <property type="term" value="P:protein refolding"/>
    <property type="evidence" value="ECO:0007669"/>
    <property type="project" value="UniProtKB-UniRule"/>
</dbReference>
<dbReference type="CDD" id="cd03344">
    <property type="entry name" value="GroEL"/>
    <property type="match status" value="1"/>
</dbReference>
<dbReference type="FunFam" id="1.10.560.10:FF:000001">
    <property type="entry name" value="60 kDa chaperonin"/>
    <property type="match status" value="1"/>
</dbReference>
<dbReference type="FunFam" id="3.50.7.10:FF:000001">
    <property type="entry name" value="60 kDa chaperonin"/>
    <property type="match status" value="1"/>
</dbReference>
<dbReference type="Gene3D" id="3.50.7.10">
    <property type="entry name" value="GroEL"/>
    <property type="match status" value="1"/>
</dbReference>
<dbReference type="Gene3D" id="1.10.560.10">
    <property type="entry name" value="GroEL-like equatorial domain"/>
    <property type="match status" value="1"/>
</dbReference>
<dbReference type="Gene3D" id="3.30.260.10">
    <property type="entry name" value="TCP-1-like chaperonin intermediate domain"/>
    <property type="match status" value="1"/>
</dbReference>
<dbReference type="HAMAP" id="MF_00600">
    <property type="entry name" value="CH60"/>
    <property type="match status" value="1"/>
</dbReference>
<dbReference type="InterPro" id="IPR018370">
    <property type="entry name" value="Chaperonin_Cpn60_CS"/>
</dbReference>
<dbReference type="InterPro" id="IPR001844">
    <property type="entry name" value="Cpn60/GroEL"/>
</dbReference>
<dbReference type="InterPro" id="IPR002423">
    <property type="entry name" value="Cpn60/GroEL/TCP-1"/>
</dbReference>
<dbReference type="InterPro" id="IPR027409">
    <property type="entry name" value="GroEL-like_apical_dom_sf"/>
</dbReference>
<dbReference type="InterPro" id="IPR027413">
    <property type="entry name" value="GROEL-like_equatorial_sf"/>
</dbReference>
<dbReference type="InterPro" id="IPR027410">
    <property type="entry name" value="TCP-1-like_intermed_sf"/>
</dbReference>
<dbReference type="NCBIfam" id="TIGR02348">
    <property type="entry name" value="GroEL"/>
    <property type="match status" value="1"/>
</dbReference>
<dbReference type="NCBIfam" id="NF000592">
    <property type="entry name" value="PRK00013.1"/>
    <property type="match status" value="1"/>
</dbReference>
<dbReference type="NCBIfam" id="NF009487">
    <property type="entry name" value="PRK12849.1"/>
    <property type="match status" value="1"/>
</dbReference>
<dbReference type="NCBIfam" id="NF009488">
    <property type="entry name" value="PRK12850.1"/>
    <property type="match status" value="1"/>
</dbReference>
<dbReference type="NCBIfam" id="NF009489">
    <property type="entry name" value="PRK12851.1"/>
    <property type="match status" value="1"/>
</dbReference>
<dbReference type="PANTHER" id="PTHR45633">
    <property type="entry name" value="60 KDA HEAT SHOCK PROTEIN, MITOCHONDRIAL"/>
    <property type="match status" value="1"/>
</dbReference>
<dbReference type="Pfam" id="PF00118">
    <property type="entry name" value="Cpn60_TCP1"/>
    <property type="match status" value="1"/>
</dbReference>
<dbReference type="PRINTS" id="PR00298">
    <property type="entry name" value="CHAPERONIN60"/>
</dbReference>
<dbReference type="SUPFAM" id="SSF52029">
    <property type="entry name" value="GroEL apical domain-like"/>
    <property type="match status" value="1"/>
</dbReference>
<dbReference type="SUPFAM" id="SSF48592">
    <property type="entry name" value="GroEL equatorial domain-like"/>
    <property type="match status" value="1"/>
</dbReference>
<dbReference type="SUPFAM" id="SSF54849">
    <property type="entry name" value="GroEL-intermediate domain like"/>
    <property type="match status" value="1"/>
</dbReference>
<dbReference type="PROSITE" id="PS00296">
    <property type="entry name" value="CHAPERONINS_CPN60"/>
    <property type="match status" value="1"/>
</dbReference>
<reference key="1">
    <citation type="journal article" date="2009" name="PLoS ONE">
        <title>Genome degradation in Brucella ovis corresponds with narrowing of its host range and tissue tropism.</title>
        <authorList>
            <person name="Tsolis R.M."/>
            <person name="Seshadri R."/>
            <person name="Santos R.L."/>
            <person name="Sangari F.J."/>
            <person name="Lobo J.M."/>
            <person name="de Jong M.F."/>
            <person name="Ren Q."/>
            <person name="Myers G."/>
            <person name="Brinkac L.M."/>
            <person name="Nelson W.C."/>
            <person name="Deboy R.T."/>
            <person name="Angiuoli S."/>
            <person name="Khouri H."/>
            <person name="Dimitrov G."/>
            <person name="Robinson J.R."/>
            <person name="Mulligan S."/>
            <person name="Walker R.L."/>
            <person name="Elzer P.E."/>
            <person name="Hassan K.A."/>
            <person name="Paulsen I.T."/>
        </authorList>
    </citation>
    <scope>NUCLEOTIDE SEQUENCE [LARGE SCALE GENOMIC DNA]</scope>
    <source>
        <strain>ATCC 25840 / 63/290 / NCTC 10512</strain>
    </source>
</reference>
<organism>
    <name type="scientific">Brucella ovis (strain ATCC 25840 / 63/290 / NCTC 10512)</name>
    <dbReference type="NCBI Taxonomy" id="444178"/>
    <lineage>
        <taxon>Bacteria</taxon>
        <taxon>Pseudomonadati</taxon>
        <taxon>Pseudomonadota</taxon>
        <taxon>Alphaproteobacteria</taxon>
        <taxon>Hyphomicrobiales</taxon>
        <taxon>Brucellaceae</taxon>
        <taxon>Brucella/Ochrobactrum group</taxon>
        <taxon>Brucella</taxon>
    </lineage>
</organism>
<name>CH60_BRUO2</name>
<keyword id="KW-0067">ATP-binding</keyword>
<keyword id="KW-0143">Chaperone</keyword>
<keyword id="KW-0963">Cytoplasm</keyword>
<keyword id="KW-0413">Isomerase</keyword>
<keyword id="KW-0547">Nucleotide-binding</keyword>